<gene>
    <name evidence="1" type="primary">metG</name>
    <name type="ordered locus">Mpe_A1161</name>
</gene>
<protein>
    <recommendedName>
        <fullName evidence="1">Methionine--tRNA ligase</fullName>
        <ecNumber evidence="1">6.1.1.10</ecNumber>
    </recommendedName>
    <alternativeName>
        <fullName evidence="1">Methionyl-tRNA synthetase</fullName>
        <shortName evidence="1">MetRS</shortName>
    </alternativeName>
</protein>
<keyword id="KW-0030">Aminoacyl-tRNA synthetase</keyword>
<keyword id="KW-0067">ATP-binding</keyword>
<keyword id="KW-0963">Cytoplasm</keyword>
<keyword id="KW-0436">Ligase</keyword>
<keyword id="KW-0479">Metal-binding</keyword>
<keyword id="KW-0547">Nucleotide-binding</keyword>
<keyword id="KW-0648">Protein biosynthesis</keyword>
<keyword id="KW-1185">Reference proteome</keyword>
<keyword id="KW-0694">RNA-binding</keyword>
<keyword id="KW-0820">tRNA-binding</keyword>
<keyword id="KW-0862">Zinc</keyword>
<name>SYM_METPP</name>
<sequence length="697" mass="77387">MPRQLFVTTALPYANGHFHIGHIMEYIQADIWVRFQRMQGHAVHFVGADDAHGAPIMIAAEKAGKTPQQFVADIAAGRKPYLDGFHIAFDNWHSTDGPENHQLAQDTYRALRRNGLIFTREIEQFFDPVKAMFLPDRYIKGECPKCGAKDQYGDSCEVCGAVYAPTELKNPYSTLTGATPVMKTSEHHFFQLSSPRCLDFLKDWTHGSAPISGQPRLQAEVLNKIKEWFATDEQGHGGLADWDISRDAPYFGIEIPDAPGKYFYVWLDAPIGYLASLKNYFDKQGLDFEAFMADPKTEQVHFIGKDITYFHTLFWPAMLHFSGRRTPDHVFVHGFITVSGEKMSKSRGTGISPLRYLEIGMNAEWLRYYIAAKLNGRVEDVDFNPDDFVARVNSDLVGKYINIASRAAGFLSKRFDGRLTAELPAESRTLLEGLQAARDDIARLYEDREYAKALREAMALADRVNEYVDANKPWELAKQAGQDARLQQVCSTCIEAFRLLTIYLKPVLPALAAQVEGFLKVEPMRFADAGRLLGAHAISEYKHLMQRVDPKLLDALFEPPAEPSPQTSPAAAGAGAVPGGEALAPTITIDDFTKIDLRLAQIVDAALVEGSTKLLRLSLDVGEGRHRTVFSGIQSAFKPADVIGKFTVVVANLAPRKMKFGLSEGMVLAASHADEKTHPGLYLLEPTPGAVPGLRVR</sequence>
<evidence type="ECO:0000255" key="1">
    <source>
        <dbReference type="HAMAP-Rule" id="MF_00098"/>
    </source>
</evidence>
<evidence type="ECO:0000256" key="2">
    <source>
        <dbReference type="SAM" id="MobiDB-lite"/>
    </source>
</evidence>
<organism>
    <name type="scientific">Methylibium petroleiphilum (strain ATCC BAA-1232 / LMG 22953 / PM1)</name>
    <dbReference type="NCBI Taxonomy" id="420662"/>
    <lineage>
        <taxon>Bacteria</taxon>
        <taxon>Pseudomonadati</taxon>
        <taxon>Pseudomonadota</taxon>
        <taxon>Betaproteobacteria</taxon>
        <taxon>Burkholderiales</taxon>
        <taxon>Sphaerotilaceae</taxon>
        <taxon>Methylibium</taxon>
    </lineage>
</organism>
<proteinExistence type="inferred from homology"/>
<dbReference type="EC" id="6.1.1.10" evidence="1"/>
<dbReference type="EMBL" id="CP000555">
    <property type="protein sequence ID" value="ABM94122.1"/>
    <property type="molecule type" value="Genomic_DNA"/>
</dbReference>
<dbReference type="RefSeq" id="WP_011828759.1">
    <property type="nucleotide sequence ID" value="NC_008825.1"/>
</dbReference>
<dbReference type="SMR" id="A2SEY3"/>
<dbReference type="STRING" id="420662.Mpe_A1161"/>
<dbReference type="KEGG" id="mpt:Mpe_A1161"/>
<dbReference type="eggNOG" id="COG0073">
    <property type="taxonomic scope" value="Bacteria"/>
</dbReference>
<dbReference type="eggNOG" id="COG0143">
    <property type="taxonomic scope" value="Bacteria"/>
</dbReference>
<dbReference type="HOGENOM" id="CLU_009710_7_0_4"/>
<dbReference type="Proteomes" id="UP000000366">
    <property type="component" value="Chromosome"/>
</dbReference>
<dbReference type="GO" id="GO:0005829">
    <property type="term" value="C:cytosol"/>
    <property type="evidence" value="ECO:0007669"/>
    <property type="project" value="TreeGrafter"/>
</dbReference>
<dbReference type="GO" id="GO:0005524">
    <property type="term" value="F:ATP binding"/>
    <property type="evidence" value="ECO:0007669"/>
    <property type="project" value="UniProtKB-UniRule"/>
</dbReference>
<dbReference type="GO" id="GO:0046872">
    <property type="term" value="F:metal ion binding"/>
    <property type="evidence" value="ECO:0007669"/>
    <property type="project" value="UniProtKB-KW"/>
</dbReference>
<dbReference type="GO" id="GO:0004825">
    <property type="term" value="F:methionine-tRNA ligase activity"/>
    <property type="evidence" value="ECO:0007669"/>
    <property type="project" value="UniProtKB-UniRule"/>
</dbReference>
<dbReference type="GO" id="GO:0000049">
    <property type="term" value="F:tRNA binding"/>
    <property type="evidence" value="ECO:0007669"/>
    <property type="project" value="UniProtKB-KW"/>
</dbReference>
<dbReference type="GO" id="GO:0006431">
    <property type="term" value="P:methionyl-tRNA aminoacylation"/>
    <property type="evidence" value="ECO:0007669"/>
    <property type="project" value="UniProtKB-UniRule"/>
</dbReference>
<dbReference type="CDD" id="cd07957">
    <property type="entry name" value="Anticodon_Ia_Met"/>
    <property type="match status" value="1"/>
</dbReference>
<dbReference type="CDD" id="cd00814">
    <property type="entry name" value="MetRS_core"/>
    <property type="match status" value="1"/>
</dbReference>
<dbReference type="CDD" id="cd02800">
    <property type="entry name" value="tRNA_bind_EcMetRS_like"/>
    <property type="match status" value="1"/>
</dbReference>
<dbReference type="FunFam" id="1.10.730.10:FF:000005">
    <property type="entry name" value="Methionine--tRNA ligase"/>
    <property type="match status" value="1"/>
</dbReference>
<dbReference type="FunFam" id="2.20.28.20:FF:000001">
    <property type="entry name" value="Methionine--tRNA ligase"/>
    <property type="match status" value="1"/>
</dbReference>
<dbReference type="FunFam" id="2.40.50.140:FF:000042">
    <property type="entry name" value="Methionine--tRNA ligase"/>
    <property type="match status" value="1"/>
</dbReference>
<dbReference type="Gene3D" id="3.40.50.620">
    <property type="entry name" value="HUPs"/>
    <property type="match status" value="1"/>
</dbReference>
<dbReference type="Gene3D" id="1.10.730.10">
    <property type="entry name" value="Isoleucyl-tRNA Synthetase, Domain 1"/>
    <property type="match status" value="1"/>
</dbReference>
<dbReference type="Gene3D" id="2.20.28.20">
    <property type="entry name" value="Methionyl-tRNA synthetase, Zn-domain"/>
    <property type="match status" value="1"/>
</dbReference>
<dbReference type="Gene3D" id="2.40.50.140">
    <property type="entry name" value="Nucleic acid-binding proteins"/>
    <property type="match status" value="1"/>
</dbReference>
<dbReference type="HAMAP" id="MF_00098">
    <property type="entry name" value="Met_tRNA_synth_type1"/>
    <property type="match status" value="1"/>
</dbReference>
<dbReference type="InterPro" id="IPR001412">
    <property type="entry name" value="aa-tRNA-synth_I_CS"/>
</dbReference>
<dbReference type="InterPro" id="IPR041872">
    <property type="entry name" value="Anticodon_Met"/>
</dbReference>
<dbReference type="InterPro" id="IPR004495">
    <property type="entry name" value="Met-tRNA-synth_bsu_C"/>
</dbReference>
<dbReference type="InterPro" id="IPR023458">
    <property type="entry name" value="Met-tRNA_ligase_1"/>
</dbReference>
<dbReference type="InterPro" id="IPR014758">
    <property type="entry name" value="Met-tRNA_synth"/>
</dbReference>
<dbReference type="InterPro" id="IPR015413">
    <property type="entry name" value="Methionyl/Leucyl_tRNA_Synth"/>
</dbReference>
<dbReference type="InterPro" id="IPR033911">
    <property type="entry name" value="MetRS_core"/>
</dbReference>
<dbReference type="InterPro" id="IPR029038">
    <property type="entry name" value="MetRS_Zn"/>
</dbReference>
<dbReference type="InterPro" id="IPR012340">
    <property type="entry name" value="NA-bd_OB-fold"/>
</dbReference>
<dbReference type="InterPro" id="IPR014729">
    <property type="entry name" value="Rossmann-like_a/b/a_fold"/>
</dbReference>
<dbReference type="InterPro" id="IPR002547">
    <property type="entry name" value="tRNA-bd_dom"/>
</dbReference>
<dbReference type="InterPro" id="IPR009080">
    <property type="entry name" value="tRNAsynth_Ia_anticodon-bd"/>
</dbReference>
<dbReference type="NCBIfam" id="TIGR00398">
    <property type="entry name" value="metG"/>
    <property type="match status" value="1"/>
</dbReference>
<dbReference type="NCBIfam" id="NF001100">
    <property type="entry name" value="PRK00133.1"/>
    <property type="match status" value="1"/>
</dbReference>
<dbReference type="PANTHER" id="PTHR45765">
    <property type="entry name" value="METHIONINE--TRNA LIGASE"/>
    <property type="match status" value="1"/>
</dbReference>
<dbReference type="PANTHER" id="PTHR45765:SF1">
    <property type="entry name" value="METHIONINE--TRNA LIGASE, CYTOPLASMIC"/>
    <property type="match status" value="1"/>
</dbReference>
<dbReference type="Pfam" id="PF09334">
    <property type="entry name" value="tRNA-synt_1g"/>
    <property type="match status" value="1"/>
</dbReference>
<dbReference type="Pfam" id="PF01588">
    <property type="entry name" value="tRNA_bind"/>
    <property type="match status" value="1"/>
</dbReference>
<dbReference type="PRINTS" id="PR01041">
    <property type="entry name" value="TRNASYNTHMET"/>
</dbReference>
<dbReference type="SUPFAM" id="SSF47323">
    <property type="entry name" value="Anticodon-binding domain of a subclass of class I aminoacyl-tRNA synthetases"/>
    <property type="match status" value="1"/>
</dbReference>
<dbReference type="SUPFAM" id="SSF57770">
    <property type="entry name" value="Methionyl-tRNA synthetase (MetRS), Zn-domain"/>
    <property type="match status" value="1"/>
</dbReference>
<dbReference type="SUPFAM" id="SSF50249">
    <property type="entry name" value="Nucleic acid-binding proteins"/>
    <property type="match status" value="1"/>
</dbReference>
<dbReference type="SUPFAM" id="SSF52374">
    <property type="entry name" value="Nucleotidylyl transferase"/>
    <property type="match status" value="1"/>
</dbReference>
<dbReference type="PROSITE" id="PS00178">
    <property type="entry name" value="AA_TRNA_LIGASE_I"/>
    <property type="match status" value="1"/>
</dbReference>
<dbReference type="PROSITE" id="PS50886">
    <property type="entry name" value="TRBD"/>
    <property type="match status" value="1"/>
</dbReference>
<reference key="1">
    <citation type="journal article" date="2007" name="J. Bacteriol.">
        <title>Whole-genome analysis of the methyl tert-butyl ether-degrading beta-proteobacterium Methylibium petroleiphilum PM1.</title>
        <authorList>
            <person name="Kane S.R."/>
            <person name="Chakicherla A.Y."/>
            <person name="Chain P.S.G."/>
            <person name="Schmidt R."/>
            <person name="Shin M.W."/>
            <person name="Legler T.C."/>
            <person name="Scow K.M."/>
            <person name="Larimer F.W."/>
            <person name="Lucas S.M."/>
            <person name="Richardson P.M."/>
            <person name="Hristova K.R."/>
        </authorList>
    </citation>
    <scope>NUCLEOTIDE SEQUENCE [LARGE SCALE GENOMIC DNA]</scope>
    <source>
        <strain>ATCC BAA-1232 / LMG 22953 / PM1</strain>
    </source>
</reference>
<comment type="function">
    <text evidence="1">Is required not only for elongation of protein synthesis but also for the initiation of all mRNA translation through initiator tRNA(fMet) aminoacylation.</text>
</comment>
<comment type="catalytic activity">
    <reaction evidence="1">
        <text>tRNA(Met) + L-methionine + ATP = L-methionyl-tRNA(Met) + AMP + diphosphate</text>
        <dbReference type="Rhea" id="RHEA:13481"/>
        <dbReference type="Rhea" id="RHEA-COMP:9667"/>
        <dbReference type="Rhea" id="RHEA-COMP:9698"/>
        <dbReference type="ChEBI" id="CHEBI:30616"/>
        <dbReference type="ChEBI" id="CHEBI:33019"/>
        <dbReference type="ChEBI" id="CHEBI:57844"/>
        <dbReference type="ChEBI" id="CHEBI:78442"/>
        <dbReference type="ChEBI" id="CHEBI:78530"/>
        <dbReference type="ChEBI" id="CHEBI:456215"/>
        <dbReference type="EC" id="6.1.1.10"/>
    </reaction>
</comment>
<comment type="cofactor">
    <cofactor evidence="1">
        <name>Zn(2+)</name>
        <dbReference type="ChEBI" id="CHEBI:29105"/>
    </cofactor>
    <text evidence="1">Binds 1 zinc ion per subunit.</text>
</comment>
<comment type="subunit">
    <text evidence="1">Homodimer.</text>
</comment>
<comment type="subcellular location">
    <subcellularLocation>
        <location evidence="1">Cytoplasm</location>
    </subcellularLocation>
</comment>
<comment type="similarity">
    <text evidence="1">Belongs to the class-I aminoacyl-tRNA synthetase family. MetG type 1 subfamily.</text>
</comment>
<feature type="chain" id="PRO_0000331850" description="Methionine--tRNA ligase">
    <location>
        <begin position="1"/>
        <end position="697"/>
    </location>
</feature>
<feature type="domain" description="tRNA-binding" evidence="1">
    <location>
        <begin position="591"/>
        <end position="697"/>
    </location>
</feature>
<feature type="region of interest" description="Disordered" evidence="2">
    <location>
        <begin position="557"/>
        <end position="577"/>
    </location>
</feature>
<feature type="short sequence motif" description="'HIGH' region">
    <location>
        <begin position="12"/>
        <end position="22"/>
    </location>
</feature>
<feature type="short sequence motif" description="'KMSKS' region">
    <location>
        <begin position="342"/>
        <end position="346"/>
    </location>
</feature>
<feature type="binding site" evidence="1">
    <location>
        <position position="143"/>
    </location>
    <ligand>
        <name>Zn(2+)</name>
        <dbReference type="ChEBI" id="CHEBI:29105"/>
    </ligand>
</feature>
<feature type="binding site" evidence="1">
    <location>
        <position position="146"/>
    </location>
    <ligand>
        <name>Zn(2+)</name>
        <dbReference type="ChEBI" id="CHEBI:29105"/>
    </ligand>
</feature>
<feature type="binding site" evidence="1">
    <location>
        <position position="156"/>
    </location>
    <ligand>
        <name>Zn(2+)</name>
        <dbReference type="ChEBI" id="CHEBI:29105"/>
    </ligand>
</feature>
<feature type="binding site" evidence="1">
    <location>
        <position position="159"/>
    </location>
    <ligand>
        <name>Zn(2+)</name>
        <dbReference type="ChEBI" id="CHEBI:29105"/>
    </ligand>
</feature>
<feature type="binding site" evidence="1">
    <location>
        <position position="345"/>
    </location>
    <ligand>
        <name>ATP</name>
        <dbReference type="ChEBI" id="CHEBI:30616"/>
    </ligand>
</feature>
<accession>A2SEY3</accession>